<feature type="initiator methionine" description="Removed" evidence="2">
    <location>
        <position position="1"/>
    </location>
</feature>
<feature type="chain" id="PRO_0000056141" description="E3 ubiquitin-protein ligase UBR2">
    <location>
        <begin position="2"/>
        <end position="1755"/>
    </location>
</feature>
<feature type="zinc finger region" description="UBR-type" evidence="4">
    <location>
        <begin position="97"/>
        <end position="168"/>
    </location>
</feature>
<feature type="zinc finger region" description="RING-type; atypical">
    <location>
        <begin position="1108"/>
        <end position="1214"/>
    </location>
</feature>
<feature type="region of interest" description="Disordered" evidence="5">
    <location>
        <begin position="1012"/>
        <end position="1033"/>
    </location>
</feature>
<feature type="coiled-coil region" evidence="3">
    <location>
        <begin position="1019"/>
        <end position="1054"/>
    </location>
</feature>
<feature type="compositionally biased region" description="Basic and acidic residues" evidence="5">
    <location>
        <begin position="1021"/>
        <end position="1033"/>
    </location>
</feature>
<feature type="binding site" evidence="2">
    <location>
        <position position="99"/>
    </location>
    <ligand>
        <name>Zn(2+)</name>
        <dbReference type="ChEBI" id="CHEBI:29105"/>
        <label>1</label>
    </ligand>
</feature>
<feature type="binding site" evidence="2">
    <location>
        <position position="112"/>
    </location>
    <ligand>
        <name>Zn(2+)</name>
        <dbReference type="ChEBI" id="CHEBI:29105"/>
        <label>2</label>
    </ligand>
</feature>
<feature type="binding site" evidence="2">
    <location>
        <position position="115"/>
    </location>
    <ligand>
        <name>Zn(2+)</name>
        <dbReference type="ChEBI" id="CHEBI:29105"/>
        <label>2</label>
    </ligand>
</feature>
<feature type="binding site" evidence="2">
    <location>
        <position position="124"/>
    </location>
    <ligand>
        <name>Zn(2+)</name>
        <dbReference type="ChEBI" id="CHEBI:29105"/>
        <label>1</label>
    </ligand>
</feature>
<feature type="binding site" evidence="2">
    <location>
        <position position="127"/>
    </location>
    <ligand>
        <name>Zn(2+)</name>
        <dbReference type="ChEBI" id="CHEBI:29105"/>
        <label>1</label>
    </ligand>
</feature>
<feature type="binding site" evidence="2">
    <location>
        <position position="127"/>
    </location>
    <ligand>
        <name>Zn(2+)</name>
        <dbReference type="ChEBI" id="CHEBI:29105"/>
        <label>3</label>
    </ligand>
</feature>
<feature type="binding site" evidence="2">
    <location>
        <position position="133"/>
    </location>
    <ligand>
        <name>Zn(2+)</name>
        <dbReference type="ChEBI" id="CHEBI:29105"/>
        <label>2</label>
    </ligand>
</feature>
<feature type="binding site" evidence="2">
    <location>
        <position position="136"/>
    </location>
    <ligand>
        <name>Zn(2+)</name>
        <dbReference type="ChEBI" id="CHEBI:29105"/>
        <label>2</label>
    </ligand>
</feature>
<feature type="binding site" evidence="2">
    <location>
        <position position="148"/>
    </location>
    <ligand>
        <name>a peptide</name>
        <dbReference type="ChEBI" id="CHEBI:60466"/>
    </ligand>
    <ligandPart>
        <name>L-arginine residue</name>
        <dbReference type="ChEBI" id="CHEBI:29965"/>
    </ligandPart>
</feature>
<feature type="binding site" evidence="2">
    <location>
        <position position="149"/>
    </location>
    <ligand>
        <name>Zn(2+)</name>
        <dbReference type="ChEBI" id="CHEBI:29105"/>
        <label>1</label>
    </ligand>
</feature>
<feature type="binding site" evidence="2">
    <location>
        <position position="150"/>
    </location>
    <ligand>
        <name>a peptide</name>
        <dbReference type="ChEBI" id="CHEBI:60466"/>
    </ligand>
    <ligandPart>
        <name>L-arginine residue</name>
        <dbReference type="ChEBI" id="CHEBI:29965"/>
    </ligandPart>
</feature>
<feature type="binding site" evidence="2">
    <location>
        <position position="151"/>
    </location>
    <ligand>
        <name>Zn(2+)</name>
        <dbReference type="ChEBI" id="CHEBI:29105"/>
        <label>3</label>
    </ligand>
</feature>
<feature type="binding site" evidence="2">
    <location>
        <position position="153"/>
    </location>
    <ligand>
        <name>a peptide</name>
        <dbReference type="ChEBI" id="CHEBI:60466"/>
    </ligand>
    <ligandPart>
        <name>L-arginine residue</name>
        <dbReference type="ChEBI" id="CHEBI:29965"/>
    </ligandPart>
</feature>
<feature type="binding site" evidence="2">
    <location>
        <position position="163"/>
    </location>
    <ligand>
        <name>Zn(2+)</name>
        <dbReference type="ChEBI" id="CHEBI:29105"/>
        <label>3</label>
    </ligand>
</feature>
<feature type="binding site" evidence="2">
    <location>
        <position position="166"/>
    </location>
    <ligand>
        <name>Zn(2+)</name>
        <dbReference type="ChEBI" id="CHEBI:29105"/>
        <label>3</label>
    </ligand>
</feature>
<feature type="binding site" evidence="1">
    <location>
        <position position="1108"/>
    </location>
    <ligand>
        <name>Zn(2+)</name>
        <dbReference type="ChEBI" id="CHEBI:29105"/>
        <label>4</label>
    </ligand>
</feature>
<feature type="binding site" evidence="1">
    <location>
        <position position="1111"/>
    </location>
    <ligand>
        <name>Zn(2+)</name>
        <dbReference type="ChEBI" id="CHEBI:29105"/>
        <label>4</label>
    </ligand>
</feature>
<feature type="binding site" evidence="1">
    <location>
        <position position="1168"/>
    </location>
    <ligand>
        <name>Zn(2+)</name>
        <dbReference type="ChEBI" id="CHEBI:29105"/>
        <label>5</label>
    </ligand>
</feature>
<feature type="binding site" evidence="1">
    <location>
        <position position="1170"/>
    </location>
    <ligand>
        <name>Zn(2+)</name>
        <dbReference type="ChEBI" id="CHEBI:29105"/>
        <label>5</label>
    </ligand>
</feature>
<feature type="binding site" evidence="1">
    <location>
        <position position="1173"/>
    </location>
    <ligand>
        <name>Zn(2+)</name>
        <dbReference type="ChEBI" id="CHEBI:29105"/>
        <label>4</label>
    </ligand>
</feature>
<feature type="binding site" evidence="1">
    <location>
        <position position="1176"/>
    </location>
    <ligand>
        <name>Zn(2+)</name>
        <dbReference type="ChEBI" id="CHEBI:29105"/>
        <label>4</label>
    </ligand>
</feature>
<feature type="binding site" evidence="1">
    <location>
        <position position="1210"/>
    </location>
    <ligand>
        <name>Zn(2+)</name>
        <dbReference type="ChEBI" id="CHEBI:29105"/>
        <label>5</label>
    </ligand>
</feature>
<feature type="binding site" evidence="1">
    <location>
        <position position="1213"/>
    </location>
    <ligand>
        <name>Zn(2+)</name>
        <dbReference type="ChEBI" id="CHEBI:29105"/>
        <label>5</label>
    </ligand>
</feature>
<feature type="modified residue" description="N-acetylalanine" evidence="2">
    <location>
        <position position="2"/>
    </location>
</feature>
<feature type="modified residue" description="Phosphoserine" evidence="2">
    <location>
        <position position="476"/>
    </location>
</feature>
<feature type="modified residue" description="Phosphoserine" evidence="2">
    <location>
        <position position="1694"/>
    </location>
</feature>
<feature type="modified residue" description="Phosphotyrosine" evidence="2">
    <location>
        <position position="1697"/>
    </location>
</feature>
<feature type="cross-link" description="Glycyl lysine isopeptide (Lys-Gly) (interchain with G-Cter in ubiquitin)" evidence="2">
    <location>
        <position position="94"/>
    </location>
</feature>
<feature type="cross-link" description="Glycyl lysine isopeptide (Lys-Gly) (interchain with G-Cter in ubiquitin)" evidence="2">
    <location>
        <position position="158"/>
    </location>
</feature>
<feature type="cross-link" description="Glycyl lysine isopeptide (Lys-Gly) (interchain with G-Cter in ubiquitin)" evidence="2">
    <location>
        <position position="165"/>
    </location>
</feature>
<feature type="cross-link" description="Glycyl lysine isopeptide (Lys-Gly) (interchain with G-Cter in ubiquitin)" evidence="2">
    <location>
        <position position="248"/>
    </location>
</feature>
<feature type="cross-link" description="Glycyl lysine isopeptide (Lys-Gly) (interchain with G-Cter in ubiquitin)" evidence="2">
    <location>
        <position position="255"/>
    </location>
</feature>
<feature type="cross-link" description="Glycyl lysine isopeptide (Lys-Gly) (interchain with G-Cter in ubiquitin)" evidence="2">
    <location>
        <position position="470"/>
    </location>
</feature>
<feature type="cross-link" description="Glycyl lysine isopeptide (Lys-Gly) (interchain with G-Cter in ubiquitin)" evidence="2">
    <location>
        <position position="488"/>
    </location>
</feature>
<feature type="cross-link" description="Glycyl lysine isopeptide (Lys-Gly) (interchain with G-Cter in ubiquitin)" evidence="2">
    <location>
        <position position="568"/>
    </location>
</feature>
<feature type="cross-link" description="Glycyl lysine isopeptide (Lys-Gly) (interchain with G-Cter in ubiquitin)" evidence="2">
    <location>
        <position position="779"/>
    </location>
</feature>
<feature type="cross-link" description="Glycyl lysine isopeptide (Lys-Gly) (interchain with G-Cter in ubiquitin)" evidence="2">
    <location>
        <position position="789"/>
    </location>
</feature>
<feature type="cross-link" description="Glycyl lysine isopeptide (Lys-Gly) (interchain with G-Cter in ubiquitin)" evidence="2">
    <location>
        <position position="1496"/>
    </location>
</feature>
<feature type="cross-link" description="Glycyl lysine isopeptide (Lys-Gly) (interchain with G-Cter in ubiquitin)" evidence="2">
    <location>
        <position position="1599"/>
    </location>
</feature>
<feature type="cross-link" description="Glycyl lysine isopeptide (Lys-Gly) (interchain with G-Cter in ubiquitin)" evidence="2">
    <location>
        <position position="1689"/>
    </location>
</feature>
<feature type="splice variant" id="VSP_015172" description="In isoform 3." evidence="22">
    <location>
        <begin position="1"/>
        <end position="197"/>
    </location>
</feature>
<feature type="splice variant" id="VSP_015173" description="In isoform 2 and isoform 3." evidence="20 22">
    <original>RQLQRDFMEDDHERAVSVTALSVQFFTAPT</original>
    <variation>ERLQRDYVTDDHDREFSVADLSVQIFTVPS</variation>
    <location>
        <begin position="397"/>
        <end position="426"/>
    </location>
</feature>
<feature type="sequence conflict" description="In Ref. 1; AAQ17202." evidence="23" ref="1">
    <original>Q</original>
    <variation>L</variation>
    <location>
        <position position="59"/>
    </location>
</feature>
<feature type="sequence conflict" description="In Ref. 1; AAQ17202 and 3; BAC65536." evidence="23" ref="1 3">
    <original>R</original>
    <variation>Q</variation>
    <location>
        <position position="137"/>
    </location>
</feature>
<feature type="sequence conflict" description="In Ref. 1; AAQ17202." evidence="23" ref="1">
    <original>S</original>
    <variation>W</variation>
    <location>
        <position position="143"/>
    </location>
</feature>
<feature type="sequence conflict" description="In Ref. 2; AAL32102." evidence="23" ref="2">
    <original>S</original>
    <variation>P</variation>
    <location>
        <position position="271"/>
    </location>
</feature>
<feature type="sequence conflict" description="In Ref. 1; AAQ17202." evidence="23" ref="1">
    <original>RMLLTEE</original>
    <variation>PNAPHRKK</variation>
    <location>
        <begin position="429"/>
        <end position="435"/>
    </location>
</feature>
<feature type="sequence conflict" description="In Ref. 1; AAQ17202." evidence="23" ref="1">
    <original>L</original>
    <variation>P</variation>
    <location>
        <position position="656"/>
    </location>
</feature>
<feature type="sequence conflict" description="In Ref. 1; AAQ17202." evidence="23" ref="1">
    <original>A</original>
    <variation>S</variation>
    <location>
        <position position="979"/>
    </location>
</feature>
<feature type="sequence conflict" description="In Ref. 5; BAC38864." evidence="23" ref="5">
    <original>S</original>
    <variation>F</variation>
    <location>
        <position position="1050"/>
    </location>
</feature>
<feature type="sequence conflict" description="In Ref. 1; AAQ17202." evidence="23" ref="1">
    <original>C</original>
    <variation>W</variation>
    <location>
        <position position="1332"/>
    </location>
</feature>
<feature type="sequence conflict" description="In Ref. 4; AAH26391." evidence="23" ref="4">
    <original>C</original>
    <variation>S</variation>
    <location>
        <position position="1619"/>
    </location>
</feature>
<comment type="function">
    <text evidence="2 6 11 12 14 15 16 17 18">E3 ubiquitin-protein ligase which is a component of the N-end rule pathway (PubMed:14585983, PubMed:19008229, PubMed:30872531, PubMed:31268597). Recognizes and binds to proteins bearing specific N-terminal residues (N-degrons) that are destabilizing according to the N-end rule, leading to their ubiquitination and subsequent degradation (PubMed:14585983, PubMed:19008229, PubMed:30872531, PubMed:31268597). Recognizes both type-1 and type-2 N-degrons, containing positively charged amino acids (Arg, Lys and His) and bulky and hydrophobic amino acids, respectively (PubMed:19008229). Does not ubiquitinate proteins that are acetylated at the N-terminus (By similarity). In contrast, it strongly binds methylated N-degrons (By similarity). Plays a critical role in chromatin inactivation and chromosome-wide transcriptional silencing during meiosis via ubiquitination of histone H2A (PubMed:14585983, PubMed:20080676). Binds leucine and is a negative regulator of the leucine-mTOR signaling pathway, thereby controlling cell growth (By similarity). Required for spermatogenesis, promotes, with Tex19.1, SPO11-dependent recombination foci to accumulate and drive robust homologous chromosome synapsis (PubMed:28708824). Polyubiquitinates LINE-1 retrotransposon encoded, LIRE1, which induces degradation, inhibiting LINE-1 retrotransposon mobilization (PubMed:28806172). Catalyzes ubiquitination and degradation of the N-terminal part of NLRP1B following NLRP1B activation by pathogens and other damage-associated signals: ubiquitination promotes degradation of the N-terminal part and subsequent release of the cleaved C-terminal part of NLRP1B, which polymerizes and forms the NLRP1B inflammasome followed by host cell pyroptosis (PubMed:30872531, PubMed:31268597). Plays a role in T-cell receptor signaling by inducing 'Lys-63'-linked ubiquitination of lymphocyte cell-specific kinase LCK (PubMed:38225265). This activity is regulated by DUSP22, which induces 'Lys-48'-linked ubiquitination of UBR2, leading to its proteasomal degradation by SCF E3 ubiquitin-protein ligase complex (By similarity).</text>
</comment>
<comment type="catalytic activity">
    <reaction evidence="6 11 17">
        <text>S-ubiquitinyl-[E2 ubiquitin-conjugating enzyme]-L-cysteine + [acceptor protein]-L-lysine = [E2 ubiquitin-conjugating enzyme]-L-cysteine + N(6)-ubiquitinyl-[acceptor protein]-L-lysine.</text>
        <dbReference type="EC" id="2.3.2.27"/>
    </reaction>
</comment>
<comment type="pathway">
    <text evidence="6 11 16">Protein modification; protein ubiquitination.</text>
</comment>
<comment type="subunit">
    <text evidence="2 6 12 13 15 17">Interacts with UBE2B; promotes the UBE2B-H2A interaction and the ubiquitination of histone H2A by UBE2B and UBR2 (PubMed:14585983, PubMed:20080676). Interacts with RECQL4 (By similarity). Interacts with Tex19.1 and Tex19.2; does not lead to Tex19.1 degradation and stabilizes it (PubMed:21103378). Interacts with L1RE1 (PubMed:28806172). Interacts with CASP8 (By similarity). Interacts with ATXN3 (By similarity). Interacts with UBE2O (PubMed:31268597).</text>
</comment>
<comment type="subcellular location">
    <subcellularLocation>
        <location evidence="6 12">Nucleus</location>
    </subcellularLocation>
    <subcellularLocation>
        <location evidence="12">Chromosome</location>
    </subcellularLocation>
    <text evidence="12">Associated with chromatin during meiosis.</text>
</comment>
<comment type="alternative products">
    <event type="alternative splicing"/>
    <isoform>
        <id>Q6WKZ8-1</id>
        <name>1</name>
        <sequence type="displayed"/>
    </isoform>
    <isoform>
        <id>Q6WKZ8-2</id>
        <name>2</name>
        <sequence type="described" ref="VSP_015173"/>
    </isoform>
    <isoform>
        <id>Q6WKZ8-3</id>
        <name>3</name>
        <sequence type="described" ref="VSP_015172 VSP_015173"/>
    </isoform>
</comment>
<comment type="tissue specificity">
    <text evidence="6 7 8 15">Highly expressed in skeletal muscle. Also expressed in heart, kidney and testis. Expressed in acinar cells of the pancreas. In testes, expressed primarily in spermatocytes. Expressed in cerebellum (PubMed:28806172).</text>
</comment>
<comment type="induction">
    <text evidence="7">In models of cancer cachexia, induced specifically at the onset and during the progression of muscle wasting.</text>
</comment>
<comment type="domain">
    <text evidence="2">The RING-H2 zinc finger is an atypical RING finger with a His ligand in place of the fourth Cys of the classical motif (By similarity). The UBR-type zinc finger forms a pocket that mediates recognition of type 1 N-degrons (By similarity). It exhibits preference for arginine in the first position, and a lower preference for lysine and histidine (By similarity). It binds N-degrons with a methylated arginine or lysine in the first position (By similarity).</text>
</comment>
<comment type="PTM">
    <text evidence="2">Dephosphorylated by DUSP22 at Ser-1694 and Tyr-1697, leading to subsequent ubiquitination and proteasomal degradation.</text>
</comment>
<comment type="PTM">
    <text evidence="2">'Lys-48'-linked ubiquitinated at Lys-94, Lys-779 and Lys-1599 following DUSP22-mediated dephosphorylation of Ser-1694 and Tyr-1697 which promotes UBR2 interaction with the SCF(FBW1A) E3 ubiquitin-protein ligase complex.</text>
</comment>
<comment type="disruption phenotype">
    <text evidence="6 9 10 14 18">Male mice are viable but not fertile, due to massive apoptosis of spermatocytes (PubMed:38225265). They have a reduction of testis weight of 68% and no detectable sperm in their epididymis. The seminiferous tubules contain reduced numbers of post-meiotic round, elongated spermatids and accumulation of pyknotic and zygotene-like nuclei. Female mice show severe prenatal lethality, but the rare survivors are fertile. Fibroblast cells display spontaneous chromosome instability and fragility (PubMed:14585983, PubMed:16488448, PubMed:28708824). UBR1 and UBR2 double knockout embryos die at mid-gestation, with defects in neurogenesis and cardiovascular development. These defects include reduced proliferation as well as precocious migration and differentiation of neural progenitor cells (PubMed:16606826). Decrease in T-cell receptor-stimulated cytokines production and Th1 and Th17 differentiation in T-cells (PubMed:38225265). 'Lys-63'-linked ubiquitination and phosphorylation of Lck are obliterated (PubMed:38225265).</text>
</comment>
<comment type="similarity">
    <text evidence="23">Belongs to the E3 ubiquitin-protein ligase UBR1-like family.</text>
</comment>
<comment type="sequence caution" evidence="23">
    <conflict type="erroneous initiation">
        <sequence resource="EMBL-CDS" id="AAH25617"/>
    </conflict>
    <text>Extended N-terminus.</text>
</comment>
<comment type="sequence caution" evidence="23">
    <conflict type="erroneous initiation">
        <sequence resource="EMBL-CDS" id="AAH31403"/>
    </conflict>
    <text>Truncated N-terminus.</text>
</comment>
<comment type="sequence caution" evidence="23">
    <conflict type="miscellaneous discrepancy">
        <sequence resource="EMBL-CDS" id="BAC65536"/>
    </conflict>
    <text>Intron retention.</text>
</comment>
<keyword id="KW-0007">Acetylation</keyword>
<keyword id="KW-0025">Alternative splicing</keyword>
<keyword id="KW-0158">Chromosome</keyword>
<keyword id="KW-0175">Coiled coil</keyword>
<keyword id="KW-1017">Isopeptide bond</keyword>
<keyword id="KW-0479">Metal-binding</keyword>
<keyword id="KW-0539">Nucleus</keyword>
<keyword id="KW-0597">Phosphoprotein</keyword>
<keyword id="KW-1185">Reference proteome</keyword>
<keyword id="KW-0808">Transferase</keyword>
<keyword id="KW-0832">Ubl conjugation</keyword>
<keyword id="KW-0833">Ubl conjugation pathway</keyword>
<keyword id="KW-0862">Zinc</keyword>
<keyword id="KW-0863">Zinc-finger</keyword>
<dbReference type="EC" id="2.3.2.27" evidence="6 17"/>
<dbReference type="EMBL" id="AY280958">
    <property type="protein sequence ID" value="AAQ17202.1"/>
    <property type="molecule type" value="mRNA"/>
</dbReference>
<dbReference type="EMBL" id="AY061885">
    <property type="protein sequence ID" value="AAL32102.1"/>
    <property type="molecule type" value="mRNA"/>
</dbReference>
<dbReference type="EMBL" id="AK122254">
    <property type="protein sequence ID" value="BAC65536.3"/>
    <property type="status" value="ALT_SEQ"/>
    <property type="molecule type" value="Unassigned_DNA"/>
</dbReference>
<dbReference type="EMBL" id="BC025617">
    <property type="protein sequence ID" value="AAH25617.1"/>
    <property type="status" value="ALT_INIT"/>
    <property type="molecule type" value="mRNA"/>
</dbReference>
<dbReference type="EMBL" id="BC026391">
    <property type="protein sequence ID" value="AAH26391.1"/>
    <property type="molecule type" value="mRNA"/>
</dbReference>
<dbReference type="EMBL" id="BC031403">
    <property type="protein sequence ID" value="AAH31403.1"/>
    <property type="status" value="ALT_INIT"/>
    <property type="molecule type" value="mRNA"/>
</dbReference>
<dbReference type="EMBL" id="BC075642">
    <property type="protein sequence ID" value="AAH75642.1"/>
    <property type="molecule type" value="mRNA"/>
</dbReference>
<dbReference type="EMBL" id="AK083320">
    <property type="protein sequence ID" value="BAC38864.1"/>
    <property type="molecule type" value="mRNA"/>
</dbReference>
<dbReference type="CCDS" id="CCDS28845.1">
    <molecule id="Q6WKZ8-1"/>
</dbReference>
<dbReference type="CCDS" id="CCDS50127.1">
    <molecule id="Q6WKZ8-2"/>
</dbReference>
<dbReference type="RefSeq" id="NP_001170845.1">
    <molecule id="Q6WKZ8-2"/>
    <property type="nucleotide sequence ID" value="NM_001177374.2"/>
</dbReference>
<dbReference type="RefSeq" id="NP_666190.2">
    <molecule id="Q6WKZ8-1"/>
    <property type="nucleotide sequence ID" value="NM_146078.3"/>
</dbReference>
<dbReference type="BMRB" id="Q6WKZ8"/>
<dbReference type="SMR" id="Q6WKZ8"/>
<dbReference type="BioGRID" id="230327">
    <property type="interactions" value="4"/>
</dbReference>
<dbReference type="ELM" id="Q6WKZ8"/>
<dbReference type="FunCoup" id="Q6WKZ8">
    <property type="interactions" value="2173"/>
</dbReference>
<dbReference type="STRING" id="10090.ENSMUSP00000108963"/>
<dbReference type="GlyGen" id="Q6WKZ8">
    <property type="glycosylation" value="2 sites, 1 N-linked glycan (1 site), 1 O-linked glycan (1 site)"/>
</dbReference>
<dbReference type="iPTMnet" id="Q6WKZ8"/>
<dbReference type="PhosphoSitePlus" id="Q6WKZ8"/>
<dbReference type="SwissPalm" id="Q6WKZ8"/>
<dbReference type="PaxDb" id="10090-ENSMUSP00000108961"/>
<dbReference type="PeptideAtlas" id="Q6WKZ8"/>
<dbReference type="ProteomicsDB" id="300072">
    <molecule id="Q6WKZ8-1"/>
</dbReference>
<dbReference type="ProteomicsDB" id="300073">
    <molecule id="Q6WKZ8-2"/>
</dbReference>
<dbReference type="ProteomicsDB" id="300074">
    <molecule id="Q6WKZ8-3"/>
</dbReference>
<dbReference type="Pumba" id="Q6WKZ8"/>
<dbReference type="Antibodypedia" id="30162">
    <property type="antibodies" value="229 antibodies from 31 providers"/>
</dbReference>
<dbReference type="DNASU" id="224826"/>
<dbReference type="Ensembl" id="ENSMUST00000113335.4">
    <molecule id="Q6WKZ8-2"/>
    <property type="protein sequence ID" value="ENSMUSP00000108961.3"/>
    <property type="gene ID" value="ENSMUSG00000023977.16"/>
</dbReference>
<dbReference type="Ensembl" id="ENSMUST00000113337.10">
    <molecule id="Q6WKZ8-1"/>
    <property type="protein sequence ID" value="ENSMUSP00000108963.3"/>
    <property type="gene ID" value="ENSMUSG00000023977.16"/>
</dbReference>
<dbReference type="GeneID" id="224826"/>
<dbReference type="KEGG" id="mmu:224826"/>
<dbReference type="UCSC" id="uc012aus.1">
    <molecule id="Q6WKZ8-1"/>
    <property type="organism name" value="mouse"/>
</dbReference>
<dbReference type="UCSC" id="uc012auu.1">
    <molecule id="Q6WKZ8-3"/>
    <property type="organism name" value="mouse"/>
</dbReference>
<dbReference type="AGR" id="MGI:1861099"/>
<dbReference type="CTD" id="23304"/>
<dbReference type="MGI" id="MGI:1861099">
    <property type="gene designation" value="Ubr2"/>
</dbReference>
<dbReference type="VEuPathDB" id="HostDB:ENSMUSG00000023977"/>
<dbReference type="eggNOG" id="KOG1140">
    <property type="taxonomic scope" value="Eukaryota"/>
</dbReference>
<dbReference type="GeneTree" id="ENSGT00950000183075"/>
<dbReference type="HOGENOM" id="CLU_001801_2_0_1"/>
<dbReference type="InParanoid" id="Q6WKZ8"/>
<dbReference type="OMA" id="GEASYMC"/>
<dbReference type="OrthoDB" id="26387at2759"/>
<dbReference type="PhylomeDB" id="Q6WKZ8"/>
<dbReference type="TreeFam" id="TF323875"/>
<dbReference type="Reactome" id="R-MMU-983168">
    <property type="pathway name" value="Antigen processing: Ubiquitination &amp; Proteasome degradation"/>
</dbReference>
<dbReference type="UniPathway" id="UPA00143"/>
<dbReference type="BioGRID-ORCS" id="224826">
    <property type="hits" value="5 hits in 81 CRISPR screens"/>
</dbReference>
<dbReference type="ChiTaRS" id="Ubr2">
    <property type="organism name" value="mouse"/>
</dbReference>
<dbReference type="PRO" id="PR:Q6WKZ8"/>
<dbReference type="Proteomes" id="UP000000589">
    <property type="component" value="Chromosome 17"/>
</dbReference>
<dbReference type="RNAct" id="Q6WKZ8">
    <property type="molecule type" value="protein"/>
</dbReference>
<dbReference type="Bgee" id="ENSMUSG00000023977">
    <property type="expression patterns" value="Expressed in rostral migratory stream and 235 other cell types or tissues"/>
</dbReference>
<dbReference type="ExpressionAtlas" id="Q6WKZ8">
    <property type="expression patterns" value="baseline and differential"/>
</dbReference>
<dbReference type="GO" id="GO:0000785">
    <property type="term" value="C:chromatin"/>
    <property type="evidence" value="ECO:0000314"/>
    <property type="project" value="UniProtKB"/>
</dbReference>
<dbReference type="GO" id="GO:0005634">
    <property type="term" value="C:nucleus"/>
    <property type="evidence" value="ECO:0007669"/>
    <property type="project" value="UniProtKB-SubCell"/>
</dbReference>
<dbReference type="GO" id="GO:0000151">
    <property type="term" value="C:ubiquitin ligase complex"/>
    <property type="evidence" value="ECO:0000316"/>
    <property type="project" value="MGI"/>
</dbReference>
<dbReference type="GO" id="GO:0141053">
    <property type="term" value="F:histone H2A ubiquitin ligase activity"/>
    <property type="evidence" value="ECO:0000314"/>
    <property type="project" value="UniProtKB"/>
</dbReference>
<dbReference type="GO" id="GO:0070728">
    <property type="term" value="F:L-leucine binding"/>
    <property type="evidence" value="ECO:0007669"/>
    <property type="project" value="Ensembl"/>
</dbReference>
<dbReference type="GO" id="GO:0061630">
    <property type="term" value="F:ubiquitin protein ligase activity"/>
    <property type="evidence" value="ECO:0000314"/>
    <property type="project" value="UniProtKB"/>
</dbReference>
<dbReference type="GO" id="GO:0008270">
    <property type="term" value="F:zinc ion binding"/>
    <property type="evidence" value="ECO:0007669"/>
    <property type="project" value="UniProtKB-KW"/>
</dbReference>
<dbReference type="GO" id="GO:0071233">
    <property type="term" value="P:cellular response to L-leucine"/>
    <property type="evidence" value="ECO:0000250"/>
    <property type="project" value="UniProtKB"/>
</dbReference>
<dbReference type="GO" id="GO:0031507">
    <property type="term" value="P:heterochromatin formation"/>
    <property type="evidence" value="ECO:0000314"/>
    <property type="project" value="UniProtKB"/>
</dbReference>
<dbReference type="GO" id="GO:0007141">
    <property type="term" value="P:male meiosis I"/>
    <property type="evidence" value="ECO:0000315"/>
    <property type="project" value="MGI"/>
</dbReference>
<dbReference type="GO" id="GO:0007140">
    <property type="term" value="P:male meiotic nuclear division"/>
    <property type="evidence" value="ECO:0000315"/>
    <property type="project" value="UniProtKB"/>
</dbReference>
<dbReference type="GO" id="GO:0032007">
    <property type="term" value="P:negative regulation of TOR signaling"/>
    <property type="evidence" value="ECO:0000250"/>
    <property type="project" value="UniProtKB"/>
</dbReference>
<dbReference type="GO" id="GO:0050862">
    <property type="term" value="P:positive regulation of T cell receptor signaling pathway"/>
    <property type="evidence" value="ECO:0007669"/>
    <property type="project" value="Ensembl"/>
</dbReference>
<dbReference type="GO" id="GO:0070534">
    <property type="term" value="P:protein K63-linked ubiquitination"/>
    <property type="evidence" value="ECO:0007669"/>
    <property type="project" value="Ensembl"/>
</dbReference>
<dbReference type="GO" id="GO:0007131">
    <property type="term" value="P:reciprocal meiotic recombination"/>
    <property type="evidence" value="ECO:0000315"/>
    <property type="project" value="UniProtKB"/>
</dbReference>
<dbReference type="GO" id="GO:0007283">
    <property type="term" value="P:spermatogenesis"/>
    <property type="evidence" value="ECO:0000315"/>
    <property type="project" value="UniProtKB"/>
</dbReference>
<dbReference type="GO" id="GO:0010526">
    <property type="term" value="P:transposable element silencing"/>
    <property type="evidence" value="ECO:0000315"/>
    <property type="project" value="UniProtKB"/>
</dbReference>
<dbReference type="GO" id="GO:0006511">
    <property type="term" value="P:ubiquitin-dependent protein catabolic process"/>
    <property type="evidence" value="ECO:0000314"/>
    <property type="project" value="MGI"/>
</dbReference>
<dbReference type="GO" id="GO:0071596">
    <property type="term" value="P:ubiquitin-dependent protein catabolic process via the N-end rule pathway"/>
    <property type="evidence" value="ECO:0000314"/>
    <property type="project" value="UniProtKB"/>
</dbReference>
<dbReference type="CDD" id="cd19679">
    <property type="entry name" value="UBR-box_UBR2"/>
    <property type="match status" value="1"/>
</dbReference>
<dbReference type="FunFam" id="2.10.110.30:FF:000001">
    <property type="entry name" value="E3 ubiquitin-protein ligase UBR2 isoform 1"/>
    <property type="match status" value="1"/>
</dbReference>
<dbReference type="FunFam" id="1.10.10.2670:FF:000001">
    <property type="entry name" value="E3 ubiquitin-protein ligase UBR2 isoform X1"/>
    <property type="match status" value="1"/>
</dbReference>
<dbReference type="FunFam" id="3.30.1390.10:FF:000003">
    <property type="entry name" value="E3 ubiquitin-protein ligase UBR2 isoform X1"/>
    <property type="match status" value="1"/>
</dbReference>
<dbReference type="Gene3D" id="2.10.110.30">
    <property type="match status" value="1"/>
</dbReference>
<dbReference type="Gene3D" id="3.30.1390.10">
    <property type="match status" value="1"/>
</dbReference>
<dbReference type="Gene3D" id="1.10.10.2670">
    <property type="entry name" value="E3 ubiquitin-protein ligase"/>
    <property type="match status" value="1"/>
</dbReference>
<dbReference type="InterPro" id="IPR003769">
    <property type="entry name" value="ClpS_core"/>
</dbReference>
<dbReference type="InterPro" id="IPR042065">
    <property type="entry name" value="E3_ELL-like"/>
</dbReference>
<dbReference type="InterPro" id="IPR044046">
    <property type="entry name" value="E3_ligase_UBR-like_C"/>
</dbReference>
<dbReference type="InterPro" id="IPR014719">
    <property type="entry name" value="Ribosomal_bL12_C/ClpS-like"/>
</dbReference>
<dbReference type="InterPro" id="IPR047508">
    <property type="entry name" value="UBR-box_UBR2"/>
</dbReference>
<dbReference type="InterPro" id="IPR039164">
    <property type="entry name" value="UBR1-like"/>
</dbReference>
<dbReference type="InterPro" id="IPR055194">
    <property type="entry name" value="UBR1-like_winged-helix"/>
</dbReference>
<dbReference type="InterPro" id="IPR036390">
    <property type="entry name" value="WH_DNA-bd_sf"/>
</dbReference>
<dbReference type="InterPro" id="IPR003126">
    <property type="entry name" value="Znf_UBR"/>
</dbReference>
<dbReference type="PANTHER" id="PTHR21497:SF28">
    <property type="entry name" value="E3 UBIQUITIN-PROTEIN LIGASE UBR2"/>
    <property type="match status" value="1"/>
</dbReference>
<dbReference type="PANTHER" id="PTHR21497">
    <property type="entry name" value="UBIQUITIN LIGASE E3 ALPHA-RELATED"/>
    <property type="match status" value="1"/>
</dbReference>
<dbReference type="Pfam" id="PF02617">
    <property type="entry name" value="ClpS"/>
    <property type="match status" value="1"/>
</dbReference>
<dbReference type="Pfam" id="PF18995">
    <property type="entry name" value="PRT6_C"/>
    <property type="match status" value="1"/>
</dbReference>
<dbReference type="Pfam" id="PF22960">
    <property type="entry name" value="UBR1-like_wing"/>
    <property type="match status" value="1"/>
</dbReference>
<dbReference type="Pfam" id="PF02207">
    <property type="entry name" value="zf-UBR"/>
    <property type="match status" value="1"/>
</dbReference>
<dbReference type="SMART" id="SM00396">
    <property type="entry name" value="ZnF_UBR1"/>
    <property type="match status" value="1"/>
</dbReference>
<dbReference type="SUPFAM" id="SSF54736">
    <property type="entry name" value="ClpS-like"/>
    <property type="match status" value="1"/>
</dbReference>
<dbReference type="SUPFAM" id="SSF46785">
    <property type="entry name" value="Winged helix' DNA-binding domain"/>
    <property type="match status" value="1"/>
</dbReference>
<dbReference type="PROSITE" id="PS51157">
    <property type="entry name" value="ZF_UBR"/>
    <property type="match status" value="1"/>
</dbReference>
<protein>
    <recommendedName>
        <fullName>E3 ubiquitin-protein ligase UBR2</fullName>
        <ecNumber evidence="6 17">2.3.2.27</ecNumber>
    </recommendedName>
    <alternativeName>
        <fullName>N-recognin-2</fullName>
    </alternativeName>
    <alternativeName>
        <fullName evidence="21">Ubiquitin-protein ligase E3-alpha-2</fullName>
    </alternativeName>
    <alternativeName>
        <fullName evidence="21">Ubiquitin-protein ligase E3-alpha-II</fullName>
    </alternativeName>
</protein>
<name>UBR2_MOUSE</name>
<sequence length="1755" mass="199155">MASEMEPEVQAIDRSLLECSAEEIAGRWLQATDLNREVYQHLAHCVPKIYCRGPNPFPQKEDTLAQHILLGPMEWYICAEDPALGFPKLEQANKPSHLCGRVFKVGEPTYSCRDCAVDPTCVLCMECFLGSIHRDHRYRMTTSGGGGFCDCGDTEAWKEGPYCQKHKLSSSEVVEEEDPLVHLSEDVIARTYNIFAIMFRYAVDILTWEKESELPEDLEVAEKSDTYYCMLFNDEVHTYEQVIYTLQKAVNCTQKEAIGFATTVDRDGRRSVRYGDFQYCDQAKTVIVRNTSRQTKPLKVQVMHSSVAAHQNFGLKALSWLGSVIGYSDGLRRILCQVGLQEGPDGENSSLVDRLMLNDSKLWKGARSVYHQLFMSSLLMDLKYKKLFALRFAKNYRQLQRDFMEDDHERAVSVTALSVQFFTAPTLARMLLTEENLMTVIIKAFMDHLKHRDAQGRFQFERYTALQAFKFRRVQSLILDLKYVLISKPTEWSDELRQKFLQGFDAFLELLKCMQGMDPITRQVGQHIEMEPEWEAAFTLQMKLTHVISMVQDWCALDEKVLIEAYKKCLAVLTQCHGGFTDGEQPITLSICGHSVETIRYCVSQEKVSIHLPISRLLAGLHVLLSKSEVAYKFPELLPLSELSPPMLIEHPLRCLVLCAQVHAGMWRRNGFSLVNQIYYYHNVKCRREMFDKDIVMLQTGVSMMDPNHFLMIMLSRFELYQLFSTPDYGKRFSSEVTHKDVVQQNNTLIEEMLYLIIMLVGERFNPGVGQVAATDEIKREIIHQLSIKPMAHSELVKSLPEDENKETGMESVIESVAHFKKPGLTGRGMYELKPECAKEFNLYFYHFSRAEQSKAEEAQRKLKRENKEDTALPPPALPPFCPLFASLVNILQCDVMLYIMGTILQWAVEHHGSAWSESMLQRVLHLIGMALQEEKHHLENAVEGHVQTFTFTQKISKPGDAPHNSPSILAMLETLQNAPSLEAHKDMIRWLLKMFNAIKKIRECSSSSPVAEAEGTIMEESSRDKDKAERKRKAEIARLRREKIMAQMSEMQRHFIDENKELFQQTLELDTSASATLDSSPPVSDAALTALGPAQTQVPEPRQFVTCILCQEEQEVTVGSRAMVLAAFVQRSTVLSKDRTKTIADPEKYDPLFMHPDLSCGTHTGSCGHVMHAHCWQRYFDSVQAKEQRRQQRLRLHTSYDVENGEFLCPLCECLSNTVIPLLLPPRSILSRRLNFSDQPDLAQWTRAVTQQIKVVQMLRRKHNAADTSSSEDTEAMNIIPIPEGFRPDFYPRNPYSDSIKEMLTTFGTAAYKVGLKVHPNEGDPRVPILCWGTCAYTIQSIERILSDEEKPVFGPLPCRLDDCLRSLTRFAAAHWTVALLPVVQGHFCKLFASLVPSDSYEDLPCILDIDMFHLLVGLVLAFPALQCQDFSGSSLATGDLHIFHLVTMAHIVQILLTSCTEENGMDQENPTGEEELAILSLHKTLHQYTGSALKEAPSGWHLWRSVRAAIMPFLKCSALFFHYLNGVPAPPDLQVSGTSHFEHLCNYLSLPTNLIHLFQENSDIMNSLIESWCQNSEVKRYLNGERGAISYPRGANKLIDLPEDYSSLINQASNFSCPKSGGDKSRAPTLCLVCGSLLCSQSYCCQAELEGEDVGACTAHTYSCGSGAGIFLRVRECQVLFLAGKTKGCFYSPPYLDDYGETDQGLRRGNPLHLCQERFRKIQKLWQQHSITEEIGHAQEANQTLVGIDWQHL</sequence>
<accession>Q6WKZ8</accession>
<accession>Q6DIB9</accession>
<accession>Q80U31</accession>
<accession>Q8BUL9</accession>
<accession>Q8CGW0</accession>
<accession>Q8K2I6</accession>
<accession>Q8R0V7</accession>
<accession>Q8R130</accession>
<organism>
    <name type="scientific">Mus musculus</name>
    <name type="common">Mouse</name>
    <dbReference type="NCBI Taxonomy" id="10090"/>
    <lineage>
        <taxon>Eukaryota</taxon>
        <taxon>Metazoa</taxon>
        <taxon>Chordata</taxon>
        <taxon>Craniata</taxon>
        <taxon>Vertebrata</taxon>
        <taxon>Euteleostomi</taxon>
        <taxon>Mammalia</taxon>
        <taxon>Eutheria</taxon>
        <taxon>Euarchontoglires</taxon>
        <taxon>Glires</taxon>
        <taxon>Rodentia</taxon>
        <taxon>Myomorpha</taxon>
        <taxon>Muroidea</taxon>
        <taxon>Muridae</taxon>
        <taxon>Murinae</taxon>
        <taxon>Mus</taxon>
        <taxon>Mus</taxon>
    </lineage>
</organism>
<reference key="1">
    <citation type="journal article" date="2003" name="Mol. Cell. Biol.">
        <title>Female lethality and apoptosis of spermatocytes in mice lacking the UBR2 ubiquitin ligase of the N-end rule pathway.</title>
        <authorList>
            <person name="Kwon Y.T."/>
            <person name="Xia Z."/>
            <person name="An J.Y."/>
            <person name="Tasaki T."/>
            <person name="Davydov I.V."/>
            <person name="Seo J.W."/>
            <person name="Sheng J."/>
            <person name="Xie Y."/>
            <person name="Varshavsky A."/>
        </authorList>
    </citation>
    <scope>NUCLEOTIDE SEQUENCE [MRNA] (ISOFORM 2)</scope>
    <scope>INTERACTION WITH UBE2B</scope>
    <scope>SUBCELLULAR LOCATION</scope>
    <scope>TISSUE SPECIFICITY</scope>
    <scope>FUNCTION</scope>
    <scope>CATALYTIC ACTIVITY</scope>
    <scope>PATHWAY</scope>
    <scope>DISRUPTION PHENOTYPE</scope>
</reference>
<reference key="2">
    <citation type="journal article" date="2004" name="Cancer Res.">
        <title>Regulation of protein catabolism by muscle-specific and cytokine-inducible ubiquitin ligase E3alpha-II during cancer cachexia.</title>
        <authorList>
            <person name="Kwak K.S."/>
            <person name="Zhou X."/>
            <person name="Solomon V."/>
            <person name="Baracos V.E."/>
            <person name="Davis J."/>
            <person name="Bannon A.W."/>
            <person name="Boyle W.J."/>
            <person name="Lacey D.L."/>
            <person name="Han H.Q."/>
        </authorList>
    </citation>
    <scope>NUCLEOTIDE SEQUENCE [MRNA] (ISOFORM 1)</scope>
    <scope>TISSUE SPECIFICITY</scope>
    <scope>INDUCTION</scope>
    <source>
        <strain>C3H/HeN</strain>
    </source>
</reference>
<reference key="3">
    <citation type="journal article" date="2003" name="DNA Res.">
        <title>Prediction of the coding sequences of mouse homologues of KIAA gene: II. The complete nucleotide sequences of 400 mouse KIAA-homologous cDNAs identified by screening of terminal sequences of cDNA clones randomly sampled from size-fractionated libraries.</title>
        <authorList>
            <person name="Okazaki N."/>
            <person name="Kikuno R."/>
            <person name="Ohara R."/>
            <person name="Inamoto S."/>
            <person name="Aizawa H."/>
            <person name="Yuasa S."/>
            <person name="Nakajima D."/>
            <person name="Nagase T."/>
            <person name="Ohara O."/>
            <person name="Koga H."/>
        </authorList>
    </citation>
    <scope>NUCLEOTIDE SEQUENCE [LARGE SCALE MRNA]</scope>
</reference>
<reference key="4">
    <citation type="journal article" date="2004" name="Genome Res.">
        <title>The status, quality, and expansion of the NIH full-length cDNA project: the Mammalian Gene Collection (MGC).</title>
        <authorList>
            <consortium name="The MGC Project Team"/>
        </authorList>
    </citation>
    <scope>NUCLEOTIDE SEQUENCE [LARGE SCALE MRNA] (ISOFORM 1)</scope>
    <source>
        <strain>FVB/N</strain>
        <tissue>Brain</tissue>
        <tissue>Mammary gland</tissue>
        <tissue>Salivary gland</tissue>
    </source>
</reference>
<reference key="5">
    <citation type="journal article" date="2005" name="Science">
        <title>The transcriptional landscape of the mammalian genome.</title>
        <authorList>
            <person name="Carninci P."/>
            <person name="Kasukawa T."/>
            <person name="Katayama S."/>
            <person name="Gough J."/>
            <person name="Frith M.C."/>
            <person name="Maeda N."/>
            <person name="Oyama R."/>
            <person name="Ravasi T."/>
            <person name="Lenhard B."/>
            <person name="Wells C."/>
            <person name="Kodzius R."/>
            <person name="Shimokawa K."/>
            <person name="Bajic V.B."/>
            <person name="Brenner S.E."/>
            <person name="Batalov S."/>
            <person name="Forrest A.R."/>
            <person name="Zavolan M."/>
            <person name="Davis M.J."/>
            <person name="Wilming L.G."/>
            <person name="Aidinis V."/>
            <person name="Allen J.E."/>
            <person name="Ambesi-Impiombato A."/>
            <person name="Apweiler R."/>
            <person name="Aturaliya R.N."/>
            <person name="Bailey T.L."/>
            <person name="Bansal M."/>
            <person name="Baxter L."/>
            <person name="Beisel K.W."/>
            <person name="Bersano T."/>
            <person name="Bono H."/>
            <person name="Chalk A.M."/>
            <person name="Chiu K.P."/>
            <person name="Choudhary V."/>
            <person name="Christoffels A."/>
            <person name="Clutterbuck D.R."/>
            <person name="Crowe M.L."/>
            <person name="Dalla E."/>
            <person name="Dalrymple B.P."/>
            <person name="de Bono B."/>
            <person name="Della Gatta G."/>
            <person name="di Bernardo D."/>
            <person name="Down T."/>
            <person name="Engstrom P."/>
            <person name="Fagiolini M."/>
            <person name="Faulkner G."/>
            <person name="Fletcher C.F."/>
            <person name="Fukushima T."/>
            <person name="Furuno M."/>
            <person name="Futaki S."/>
            <person name="Gariboldi M."/>
            <person name="Georgii-Hemming P."/>
            <person name="Gingeras T.R."/>
            <person name="Gojobori T."/>
            <person name="Green R.E."/>
            <person name="Gustincich S."/>
            <person name="Harbers M."/>
            <person name="Hayashi Y."/>
            <person name="Hensch T.K."/>
            <person name="Hirokawa N."/>
            <person name="Hill D."/>
            <person name="Huminiecki L."/>
            <person name="Iacono M."/>
            <person name="Ikeo K."/>
            <person name="Iwama A."/>
            <person name="Ishikawa T."/>
            <person name="Jakt M."/>
            <person name="Kanapin A."/>
            <person name="Katoh M."/>
            <person name="Kawasawa Y."/>
            <person name="Kelso J."/>
            <person name="Kitamura H."/>
            <person name="Kitano H."/>
            <person name="Kollias G."/>
            <person name="Krishnan S.P."/>
            <person name="Kruger A."/>
            <person name="Kummerfeld S.K."/>
            <person name="Kurochkin I.V."/>
            <person name="Lareau L.F."/>
            <person name="Lazarevic D."/>
            <person name="Lipovich L."/>
            <person name="Liu J."/>
            <person name="Liuni S."/>
            <person name="McWilliam S."/>
            <person name="Madan Babu M."/>
            <person name="Madera M."/>
            <person name="Marchionni L."/>
            <person name="Matsuda H."/>
            <person name="Matsuzawa S."/>
            <person name="Miki H."/>
            <person name="Mignone F."/>
            <person name="Miyake S."/>
            <person name="Morris K."/>
            <person name="Mottagui-Tabar S."/>
            <person name="Mulder N."/>
            <person name="Nakano N."/>
            <person name="Nakauchi H."/>
            <person name="Ng P."/>
            <person name="Nilsson R."/>
            <person name="Nishiguchi S."/>
            <person name="Nishikawa S."/>
            <person name="Nori F."/>
            <person name="Ohara O."/>
            <person name="Okazaki Y."/>
            <person name="Orlando V."/>
            <person name="Pang K.C."/>
            <person name="Pavan W.J."/>
            <person name="Pavesi G."/>
            <person name="Pesole G."/>
            <person name="Petrovsky N."/>
            <person name="Piazza S."/>
            <person name="Reed J."/>
            <person name="Reid J.F."/>
            <person name="Ring B.Z."/>
            <person name="Ringwald M."/>
            <person name="Rost B."/>
            <person name="Ruan Y."/>
            <person name="Salzberg S.L."/>
            <person name="Sandelin A."/>
            <person name="Schneider C."/>
            <person name="Schoenbach C."/>
            <person name="Sekiguchi K."/>
            <person name="Semple C.A."/>
            <person name="Seno S."/>
            <person name="Sessa L."/>
            <person name="Sheng Y."/>
            <person name="Shibata Y."/>
            <person name="Shimada H."/>
            <person name="Shimada K."/>
            <person name="Silva D."/>
            <person name="Sinclair B."/>
            <person name="Sperling S."/>
            <person name="Stupka E."/>
            <person name="Sugiura K."/>
            <person name="Sultana R."/>
            <person name="Takenaka Y."/>
            <person name="Taki K."/>
            <person name="Tammoja K."/>
            <person name="Tan S.L."/>
            <person name="Tang S."/>
            <person name="Taylor M.S."/>
            <person name="Tegner J."/>
            <person name="Teichmann S.A."/>
            <person name="Ueda H.R."/>
            <person name="van Nimwegen E."/>
            <person name="Verardo R."/>
            <person name="Wei C.L."/>
            <person name="Yagi K."/>
            <person name="Yamanishi H."/>
            <person name="Zabarovsky E."/>
            <person name="Zhu S."/>
            <person name="Zimmer A."/>
            <person name="Hide W."/>
            <person name="Bult C."/>
            <person name="Grimmond S.M."/>
            <person name="Teasdale R.D."/>
            <person name="Liu E.T."/>
            <person name="Brusic V."/>
            <person name="Quackenbush J."/>
            <person name="Wahlestedt C."/>
            <person name="Mattick J.S."/>
            <person name="Hume D.A."/>
            <person name="Kai C."/>
            <person name="Sasaki D."/>
            <person name="Tomaru Y."/>
            <person name="Fukuda S."/>
            <person name="Kanamori-Katayama M."/>
            <person name="Suzuki M."/>
            <person name="Aoki J."/>
            <person name="Arakawa T."/>
            <person name="Iida J."/>
            <person name="Imamura K."/>
            <person name="Itoh M."/>
            <person name="Kato T."/>
            <person name="Kawaji H."/>
            <person name="Kawagashira N."/>
            <person name="Kawashima T."/>
            <person name="Kojima M."/>
            <person name="Kondo S."/>
            <person name="Konno H."/>
            <person name="Nakano K."/>
            <person name="Ninomiya N."/>
            <person name="Nishio T."/>
            <person name="Okada M."/>
            <person name="Plessy C."/>
            <person name="Shibata K."/>
            <person name="Shiraki T."/>
            <person name="Suzuki S."/>
            <person name="Tagami M."/>
            <person name="Waki K."/>
            <person name="Watahiki A."/>
            <person name="Okamura-Oho Y."/>
            <person name="Suzuki H."/>
            <person name="Kawai J."/>
            <person name="Hayashizaki Y."/>
        </authorList>
    </citation>
    <scope>NUCLEOTIDE SEQUENCE [LARGE SCALE MRNA] OF 1-1058 (ISOFORM 3)</scope>
    <source>
        <strain>C57BL/6J</strain>
        <tissue>Thymus</tissue>
    </source>
</reference>
<reference key="6">
    <citation type="journal article" date="2005" name="Nat. Genet.">
        <title>Deficiency of UBR1, a ubiquitin ligase of the N-end rule pathway, causes pancreatic dysfunction, malformations and mental retardation (Johanson-Blizzard syndrome).</title>
        <authorList>
            <person name="Zenker M."/>
            <person name="Mayerle J."/>
            <person name="Lerch M.M."/>
            <person name="Tagariello A."/>
            <person name="Zerres K."/>
            <person name="Durie P.R."/>
            <person name="Beier M."/>
            <person name="Hulskamp G."/>
            <person name="Guzman C."/>
            <person name="Rehder H."/>
            <person name="Beemer F.A."/>
            <person name="Hamel B.C.J."/>
            <person name="Vanlieferinghen P."/>
            <person name="Gershoni-Baruch R."/>
            <person name="Vieira M.W."/>
            <person name="Dumic M."/>
            <person name="Auslender R."/>
            <person name="Gil-da-Silva-Lopes V.L."/>
            <person name="Steinlicht S."/>
            <person name="Rauh M."/>
            <person name="Shalev S.A."/>
            <person name="Thiel C."/>
            <person name="Winterpacht A."/>
            <person name="Kwon Y.T."/>
            <person name="Varshavsky A."/>
            <person name="Reis A."/>
        </authorList>
    </citation>
    <scope>TISSUE SPECIFICITY</scope>
</reference>
<reference key="7">
    <citation type="journal article" date="2006" name="Mutat. Res.">
        <title>Loss of Ubr2, an E3 ubiquitin ligase, leads to chromosome fragility and impaired homologous recombinational repair.</title>
        <authorList>
            <person name="Ouyang Y."/>
            <person name="Kwon Y.T."/>
            <person name="An J.Y."/>
            <person name="Eller D."/>
            <person name="Tsai S.-C."/>
            <person name="Diaz-Perez S."/>
            <person name="Troke J.J."/>
            <person name="Teitell M.A."/>
            <person name="Marahrens Y."/>
        </authorList>
    </citation>
    <scope>DISRUPTION PHENOTYPE</scope>
</reference>
<reference key="8">
    <citation type="journal article" date="2006" name="Proc. Natl. Acad. Sci. U.S.A.">
        <title>Impaired neurogenesis and cardiovascular development in mice lacking the E3 ubiquitin ligases UBR1 and UBR2 of the N-end rule pathway.</title>
        <authorList>
            <person name="An J.Y."/>
            <person name="Seo J.W."/>
            <person name="Tasaki T."/>
            <person name="Lee M.J."/>
            <person name="Varshavsky A."/>
            <person name="Kwon Y.T."/>
        </authorList>
    </citation>
    <scope>DISRUPTION PHENOTYPE</scope>
</reference>
<reference key="9">
    <citation type="journal article" date="2009" name="J. Biol. Chem.">
        <title>The substrate recognition domains of the N-end rule pathway.</title>
        <authorList>
            <person name="Tasaki T."/>
            <person name="Zakrzewska A."/>
            <person name="Dudgeon D.D."/>
            <person name="Jiang Y."/>
            <person name="Lazo J.S."/>
            <person name="Kwon Y.T."/>
        </authorList>
    </citation>
    <scope>FUNCTION</scope>
    <scope>CATALYTIC ACTIVITY</scope>
    <scope>PATHWAY</scope>
</reference>
<reference key="10">
    <citation type="journal article" date="2010" name="Cell">
        <title>A tissue-specific atlas of mouse protein phosphorylation and expression.</title>
        <authorList>
            <person name="Huttlin E.L."/>
            <person name="Jedrychowski M.P."/>
            <person name="Elias J.E."/>
            <person name="Goswami T."/>
            <person name="Rad R."/>
            <person name="Beausoleil S.A."/>
            <person name="Villen J."/>
            <person name="Haas W."/>
            <person name="Sowa M.E."/>
            <person name="Gygi S.P."/>
        </authorList>
    </citation>
    <scope>IDENTIFICATION BY MASS SPECTROMETRY [LARGE SCALE ANALYSIS]</scope>
    <source>
        <tissue>Brain</tissue>
        <tissue>Brown adipose tissue</tissue>
        <tissue>Heart</tissue>
        <tissue>Kidney</tissue>
        <tissue>Liver</tissue>
        <tissue>Lung</tissue>
        <tissue>Pancreas</tissue>
        <tissue>Spleen</tissue>
        <tissue>Testis</tissue>
    </source>
</reference>
<reference key="11">
    <citation type="journal article" date="2010" name="Proc. Natl. Acad. Sci. U.S.A.">
        <title>UBR2 mediates transcriptional silencing during spermatogenesis via histone ubiquitination.</title>
        <authorList>
            <person name="An J.Y."/>
            <person name="Kim E.-A."/>
            <person name="Jiang Y."/>
            <person name="Zakrzewska A."/>
            <person name="Kim D.E."/>
            <person name="Lee M.J."/>
            <person name="Mook-Jung I."/>
            <person name="Zhang Y."/>
            <person name="Kwon Y.T."/>
        </authorList>
    </citation>
    <scope>FUNCTION</scope>
    <scope>SUBCELLULAR LOCATION</scope>
    <scope>INTERACTION WITH UBE2B AND HISTONE H2A</scope>
</reference>
<reference key="12">
    <citation type="journal article" date="2010" name="PLoS ONE">
        <title>The ubiquitin ligase Ubr2, a recognition E3 component of the N-end rule pathway, stabilizes Tex19.1 during spermatogenesis.</title>
        <authorList>
            <person name="Yang F."/>
            <person name="Cheng Y."/>
            <person name="An J.Y."/>
            <person name="Kwon Y.T."/>
            <person name="Eckardt S."/>
            <person name="Leu N.A."/>
            <person name="McLaughlin K.J."/>
            <person name="Wang P.J."/>
        </authorList>
    </citation>
    <scope>INTERACTION WITH TEX19.1 AND TEX19.2</scope>
</reference>
<reference key="13">
    <citation type="journal article" date="2017" name="Elife">
        <title>Mobilization of LINE-1 retrotransposons is restricted by Tex19.1 in mouse embryonic stem cells.</title>
        <authorList>
            <person name="MacLennan M."/>
            <person name="Garcia-Canadas M."/>
            <person name="Reichmann J."/>
            <person name="Khazina E."/>
            <person name="Wagner G."/>
            <person name="Playfoot C.J."/>
            <person name="Salvador-Palomeque C."/>
            <person name="Mann A.R."/>
            <person name="Peressini P."/>
            <person name="Sanchez L."/>
            <person name="Dobie K."/>
            <person name="Read D."/>
            <person name="Hung C.C."/>
            <person name="Eskeland R."/>
            <person name="Meehan R.R."/>
            <person name="Weichenrieder O."/>
            <person name="Garcia-Perez J.L."/>
            <person name="Adams I.R."/>
        </authorList>
    </citation>
    <scope>FUNCTION</scope>
    <scope>INTERACTION WITH L1RE1</scope>
    <scope>TISSUE SPECIFICITY</scope>
</reference>
<reference key="14">
    <citation type="journal article" date="2017" name="PLoS Genet.">
        <title>Tex19.1 promotes Spo11-dependent meiotic recombination in mouse spermatocytes.</title>
        <authorList>
            <person name="Crichton J.H."/>
            <person name="Playfoot C.J."/>
            <person name="MacLennan M."/>
            <person name="Read D."/>
            <person name="Cooke H.J."/>
            <person name="Adams I.R."/>
        </authorList>
    </citation>
    <scope>FUNCTION</scope>
    <scope>DISRUPTION PHENOTYPE</scope>
</reference>
<reference key="15">
    <citation type="journal article" date="2019" name="EMBO J.">
        <title>The N-end rule ubiquitin ligase UBR2 mediates NLRP1B inflammasome activation by anthrax lethal toxin.</title>
        <authorList>
            <person name="Xu H."/>
            <person name="Shi J."/>
            <person name="Gao H."/>
            <person name="Liu Y."/>
            <person name="Yang Z."/>
            <person name="Shao F."/>
            <person name="Dong N."/>
        </authorList>
    </citation>
    <scope>FUNCTION</scope>
    <scope>CATALYTIC ACTIVITY</scope>
    <scope>PATHWAY</scope>
    <scope>INTERACTION WITH UBE2O</scope>
</reference>
<reference key="16">
    <citation type="journal article" date="2019" name="Science">
        <title>N-terminal degradation activates the NLRP1B inflammasome.</title>
        <authorList>
            <person name="Chui A.J."/>
            <person name="Okondo M.C."/>
            <person name="Rao S.D."/>
            <person name="Gai K."/>
            <person name="Griswold A.R."/>
            <person name="Johnson D.C."/>
            <person name="Ball D.P."/>
            <person name="Taabazuing C.Y."/>
            <person name="Orth E.L."/>
            <person name="Vittimberga B.A."/>
            <person name="Bachovchin D.A."/>
        </authorList>
    </citation>
    <scope>FUNCTION</scope>
    <scope>PATHWAY</scope>
</reference>
<reference key="17">
    <citation type="journal article" date="2024" name="Nat. Commun.">
        <title>The phosphatase DUSP22 inhibits UBR2-mediated K63-ubiquitination and activation of Lck downstream of TCR signalling.</title>
        <authorList>
            <person name="Shih Y.C."/>
            <person name="Chen H.F."/>
            <person name="Wu C.Y."/>
            <person name="Ciou Y.R."/>
            <person name="Wang C.W."/>
            <person name="Chuang H.C."/>
            <person name="Tan T.H."/>
        </authorList>
    </citation>
    <scope>FUNCTION</scope>
    <scope>DISRUPTION PHENOTYPE</scope>
</reference>
<evidence type="ECO:0000250" key="1">
    <source>
        <dbReference type="UniProtKB" id="P19812"/>
    </source>
</evidence>
<evidence type="ECO:0000250" key="2">
    <source>
        <dbReference type="UniProtKB" id="Q8IWV8"/>
    </source>
</evidence>
<evidence type="ECO:0000255" key="3"/>
<evidence type="ECO:0000255" key="4">
    <source>
        <dbReference type="PROSITE-ProRule" id="PRU00508"/>
    </source>
</evidence>
<evidence type="ECO:0000256" key="5">
    <source>
        <dbReference type="SAM" id="MobiDB-lite"/>
    </source>
</evidence>
<evidence type="ECO:0000269" key="6">
    <source>
    </source>
</evidence>
<evidence type="ECO:0000269" key="7">
    <source>
    </source>
</evidence>
<evidence type="ECO:0000269" key="8">
    <source>
    </source>
</evidence>
<evidence type="ECO:0000269" key="9">
    <source>
    </source>
</evidence>
<evidence type="ECO:0000269" key="10">
    <source>
    </source>
</evidence>
<evidence type="ECO:0000269" key="11">
    <source>
    </source>
</evidence>
<evidence type="ECO:0000269" key="12">
    <source>
    </source>
</evidence>
<evidence type="ECO:0000269" key="13">
    <source>
    </source>
</evidence>
<evidence type="ECO:0000269" key="14">
    <source>
    </source>
</evidence>
<evidence type="ECO:0000269" key="15">
    <source>
    </source>
</evidence>
<evidence type="ECO:0000269" key="16">
    <source>
    </source>
</evidence>
<evidence type="ECO:0000269" key="17">
    <source>
    </source>
</evidence>
<evidence type="ECO:0000269" key="18">
    <source>
    </source>
</evidence>
<evidence type="ECO:0000303" key="19">
    <source>
    </source>
</evidence>
<evidence type="ECO:0000303" key="20">
    <source>
    </source>
</evidence>
<evidence type="ECO:0000303" key="21">
    <source>
    </source>
</evidence>
<evidence type="ECO:0000303" key="22">
    <source>
    </source>
</evidence>
<evidence type="ECO:0000305" key="23"/>
<evidence type="ECO:0000312" key="24">
    <source>
        <dbReference type="MGI" id="MGI:1861099"/>
    </source>
</evidence>
<proteinExistence type="evidence at protein level"/>
<gene>
    <name evidence="20 24" type="primary">Ubr2</name>
    <name evidence="19" type="synonym">Kiaa0349</name>
</gene>